<reference key="1">
    <citation type="submission" date="1995-05" db="EMBL/GenBank/DDBJ databases">
        <title>Comparison and high conservation of nucleotide sequences of spa-mxi regions between S.sonnei and S.flexneri -- identification of a new gene coding plausible membrane protein.</title>
        <authorList>
            <person name="Arakawa E."/>
            <person name="Kato J."/>
            <person name="Ito K."/>
            <person name="Watanabe H."/>
        </authorList>
    </citation>
    <scope>NUCLEOTIDE SEQUENCE [GENOMIC DNA]</scope>
    <source>
        <strain>HW383</strain>
    </source>
</reference>
<name>SPAN_SHISO</name>
<feature type="chain" id="PRO_0000180940" description="Surface presentation of antigens protein SpaN">
    <location>
        <begin position="1"/>
        <end position="292"/>
    </location>
</feature>
<feature type="region of interest" description="Disordered" evidence="2">
    <location>
        <begin position="129"/>
        <end position="151"/>
    </location>
</feature>
<feature type="region of interest" description="Disordered" evidence="2">
    <location>
        <begin position="267"/>
        <end position="292"/>
    </location>
</feature>
<feature type="compositionally biased region" description="Polar residues" evidence="2">
    <location>
        <begin position="273"/>
        <end position="286"/>
    </location>
</feature>
<feature type="disulfide bond" evidence="1">
    <location>
        <begin position="19"/>
        <end position="292"/>
    </location>
</feature>
<dbReference type="EMBL" id="D50601">
    <property type="protein sequence ID" value="BAA09160.1"/>
    <property type="molecule type" value="Genomic_DNA"/>
</dbReference>
<dbReference type="RefSeq" id="WP_001162455.1">
    <property type="nucleotide sequence ID" value="NZ_WHSK01000261.1"/>
</dbReference>
<dbReference type="STRING" id="216599.GCA_000283715_05242"/>
<dbReference type="OMA" id="NVYQKNS"/>
<dbReference type="GO" id="GO:0009279">
    <property type="term" value="C:cell outer membrane"/>
    <property type="evidence" value="ECO:0007669"/>
    <property type="project" value="UniProtKB-SubCell"/>
</dbReference>
<dbReference type="InterPro" id="IPR056746">
    <property type="entry name" value="SPAN_dom"/>
</dbReference>
<dbReference type="Pfam" id="PF02510">
    <property type="entry name" value="SPAN"/>
    <property type="match status" value="1"/>
</dbReference>
<keyword id="KW-0998">Cell outer membrane</keyword>
<keyword id="KW-1015">Disulfide bond</keyword>
<keyword id="KW-0472">Membrane</keyword>
<keyword id="KW-0614">Plasmid</keyword>
<keyword id="KW-0843">Virulence</keyword>
<accession>P0A1K6</accession>
<accession>P35532</accession>
<protein>
    <recommendedName>
        <fullName>Surface presentation of antigens protein SpaN</fullName>
    </recommendedName>
    <alternativeName>
        <fullName>Spa32 protein</fullName>
    </alternativeName>
</protein>
<evidence type="ECO:0000250" key="1"/>
<evidence type="ECO:0000256" key="2">
    <source>
        <dbReference type="SAM" id="MobiDB-lite"/>
    </source>
</evidence>
<evidence type="ECO:0000305" key="3"/>
<proteinExistence type="inferred from homology"/>
<geneLocation type="plasmid">
    <name>pINV</name>
</geneLocation>
<sequence length="292" mass="32978">MALDNINLNFSSDKQIEKCEKLSSIDNIDSLVLKKKRKVEIPEYSLIASNYFTIDKHFEHKHDKGEIYSGIKNAFELRNERATYSDIPESMAIKENILIPDQDIKAREKINIGDMRGIFSYNKSGNADKNFERSHTSSVNPDNLLESDNRNGQIGLKNHSLSIDKNIADIISLLNGSVAKSFELPVMNKNTADITPSMSLQEKSIVENDKNVFQKNSEMTYHFKQWGAGHSVSISVESGSFVLKPSDQFVGNKLDLILKQDAEGNYRFDSSQHNKGNKNNSTGYNEQSEEEC</sequence>
<organism>
    <name type="scientific">Shigella sonnei</name>
    <dbReference type="NCBI Taxonomy" id="624"/>
    <lineage>
        <taxon>Bacteria</taxon>
        <taxon>Pseudomonadati</taxon>
        <taxon>Pseudomonadota</taxon>
        <taxon>Gammaproteobacteria</taxon>
        <taxon>Enterobacterales</taxon>
        <taxon>Enterobacteriaceae</taxon>
        <taxon>Shigella</taxon>
    </lineage>
</organism>
<gene>
    <name type="primary">spaN</name>
    <name type="synonym">spa32</name>
</gene>
<comment type="function">
    <text evidence="1">Required for surface presentation of invasion plasmid antigens. Could play a role in preserving the translocation competence of the ipa antigens. Required for invasion and for secretion of IpaB and IpaD proteins (By similarity).</text>
</comment>
<comment type="subcellular location">
    <subcellularLocation>
        <location evidence="3">Cell outer membrane</location>
        <topology evidence="3">Peripheral membrane protein</topology>
    </subcellularLocation>
</comment>
<comment type="similarity">
    <text evidence="3">Belongs to the SpaN family.</text>
</comment>